<comment type="function">
    <text evidence="1">Involved in the third step of the chorismate pathway, which leads to the biosynthesis of aromatic amino acids. Catalyzes the cis-dehydration of 3-dehydroquinate (DHQ) and introduces the first double bond of the aromatic ring to yield 3-dehydroshikimate.</text>
</comment>
<comment type="catalytic activity">
    <reaction evidence="1">
        <text>3-dehydroquinate = 3-dehydroshikimate + H2O</text>
        <dbReference type="Rhea" id="RHEA:21096"/>
        <dbReference type="ChEBI" id="CHEBI:15377"/>
        <dbReference type="ChEBI" id="CHEBI:16630"/>
        <dbReference type="ChEBI" id="CHEBI:32364"/>
        <dbReference type="EC" id="4.2.1.10"/>
    </reaction>
</comment>
<comment type="pathway">
    <text evidence="1">Metabolic intermediate biosynthesis; chorismate biosynthesis; chorismate from D-erythrose 4-phosphate and phosphoenolpyruvate: step 3/7.</text>
</comment>
<comment type="subunit">
    <text evidence="1">Homodimer.</text>
</comment>
<comment type="similarity">
    <text evidence="1">Belongs to the type-I 3-dehydroquinase family.</text>
</comment>
<gene>
    <name evidence="1" type="primary">aroD</name>
    <name type="ordered locus">CLL_A2227</name>
</gene>
<evidence type="ECO:0000255" key="1">
    <source>
        <dbReference type="HAMAP-Rule" id="MF_00214"/>
    </source>
</evidence>
<name>AROD_CLOBB</name>
<dbReference type="EC" id="4.2.1.10" evidence="1"/>
<dbReference type="EMBL" id="CP001056">
    <property type="protein sequence ID" value="ACD24714.1"/>
    <property type="molecule type" value="Genomic_DNA"/>
</dbReference>
<dbReference type="SMR" id="B2TQ57"/>
<dbReference type="KEGG" id="cbk:CLL_A2227"/>
<dbReference type="HOGENOM" id="CLU_064444_0_0_9"/>
<dbReference type="UniPathway" id="UPA00053">
    <property type="reaction ID" value="UER00086"/>
</dbReference>
<dbReference type="Proteomes" id="UP000001195">
    <property type="component" value="Chromosome"/>
</dbReference>
<dbReference type="GO" id="GO:0003855">
    <property type="term" value="F:3-dehydroquinate dehydratase activity"/>
    <property type="evidence" value="ECO:0007669"/>
    <property type="project" value="UniProtKB-UniRule"/>
</dbReference>
<dbReference type="GO" id="GO:0046279">
    <property type="term" value="P:3,4-dihydroxybenzoate biosynthetic process"/>
    <property type="evidence" value="ECO:0007669"/>
    <property type="project" value="TreeGrafter"/>
</dbReference>
<dbReference type="GO" id="GO:0008652">
    <property type="term" value="P:amino acid biosynthetic process"/>
    <property type="evidence" value="ECO:0007669"/>
    <property type="project" value="UniProtKB-KW"/>
</dbReference>
<dbReference type="GO" id="GO:0009073">
    <property type="term" value="P:aromatic amino acid family biosynthetic process"/>
    <property type="evidence" value="ECO:0007669"/>
    <property type="project" value="UniProtKB-KW"/>
</dbReference>
<dbReference type="GO" id="GO:0009423">
    <property type="term" value="P:chorismate biosynthetic process"/>
    <property type="evidence" value="ECO:0007669"/>
    <property type="project" value="UniProtKB-UniRule"/>
</dbReference>
<dbReference type="CDD" id="cd00502">
    <property type="entry name" value="DHQase_I"/>
    <property type="match status" value="1"/>
</dbReference>
<dbReference type="FunFam" id="3.20.20.70:FF:000047">
    <property type="entry name" value="3-dehydroquinate dehydratase"/>
    <property type="match status" value="1"/>
</dbReference>
<dbReference type="Gene3D" id="3.20.20.70">
    <property type="entry name" value="Aldolase class I"/>
    <property type="match status" value="1"/>
</dbReference>
<dbReference type="HAMAP" id="MF_00214">
    <property type="entry name" value="AroD"/>
    <property type="match status" value="1"/>
</dbReference>
<dbReference type="InterPro" id="IPR018508">
    <property type="entry name" value="3-dehydroquinate_DH_AS"/>
</dbReference>
<dbReference type="InterPro" id="IPR013785">
    <property type="entry name" value="Aldolase_TIM"/>
</dbReference>
<dbReference type="InterPro" id="IPR001381">
    <property type="entry name" value="DHquinase_I"/>
</dbReference>
<dbReference type="InterPro" id="IPR050146">
    <property type="entry name" value="Type-I_3-dehydroquinase"/>
</dbReference>
<dbReference type="NCBIfam" id="TIGR01093">
    <property type="entry name" value="aroD"/>
    <property type="match status" value="1"/>
</dbReference>
<dbReference type="PANTHER" id="PTHR43699">
    <property type="entry name" value="3-DEHYDROQUINATE DEHYDRATASE"/>
    <property type="match status" value="1"/>
</dbReference>
<dbReference type="PANTHER" id="PTHR43699:SF1">
    <property type="entry name" value="3-DEHYDROQUINATE DEHYDRATASE"/>
    <property type="match status" value="1"/>
</dbReference>
<dbReference type="Pfam" id="PF01487">
    <property type="entry name" value="DHquinase_I"/>
    <property type="match status" value="1"/>
</dbReference>
<dbReference type="SUPFAM" id="SSF51569">
    <property type="entry name" value="Aldolase"/>
    <property type="match status" value="1"/>
</dbReference>
<dbReference type="PROSITE" id="PS01028">
    <property type="entry name" value="DEHYDROQUINASE_I"/>
    <property type="match status" value="1"/>
</dbReference>
<feature type="chain" id="PRO_1000099901" description="3-dehydroquinate dehydratase">
    <location>
        <begin position="1"/>
        <end position="254"/>
    </location>
</feature>
<feature type="active site" description="Proton donor/acceptor" evidence="1">
    <location>
        <position position="144"/>
    </location>
</feature>
<feature type="active site" description="Schiff-base intermediate with substrate" evidence="1">
    <location>
        <position position="171"/>
    </location>
</feature>
<feature type="binding site" evidence="1">
    <location>
        <begin position="47"/>
        <end position="49"/>
    </location>
    <ligand>
        <name>3-dehydroquinate</name>
        <dbReference type="ChEBI" id="CHEBI:32364"/>
    </ligand>
</feature>
<feature type="binding site" evidence="1">
    <location>
        <position position="83"/>
    </location>
    <ligand>
        <name>3-dehydroquinate</name>
        <dbReference type="ChEBI" id="CHEBI:32364"/>
    </ligand>
</feature>
<feature type="binding site" evidence="1">
    <location>
        <position position="214"/>
    </location>
    <ligand>
        <name>3-dehydroquinate</name>
        <dbReference type="ChEBI" id="CHEBI:32364"/>
    </ligand>
</feature>
<feature type="binding site" evidence="1">
    <location>
        <position position="233"/>
    </location>
    <ligand>
        <name>3-dehydroquinate</name>
        <dbReference type="ChEBI" id="CHEBI:32364"/>
    </ligand>
</feature>
<feature type="binding site" evidence="1">
    <location>
        <position position="237"/>
    </location>
    <ligand>
        <name>3-dehydroquinate</name>
        <dbReference type="ChEBI" id="CHEBI:32364"/>
    </ligand>
</feature>
<sequence>MKRIVQVKNVKIGEGIPKICVPIVGATSKEILDEAEKLKELTLDIVEWRVDFYEEVFDIEKVKDTLSKLTTTLNEVPLIFTFRNKIEGGEREIPIEYYLKLNLEVAKTKLVDLIDVELFIGDDLVKEIVEVAHDNDVKVIISNHDFFKTPCKEEIISRLIKMIQLNGDLPKIAVMPQCEIDVLTLLYATNEVKHKYPNNSIITMSMSGRGIISRIAGEIFGSCLTFGAAKKASAPGQIGVEELNSVLKVLHENI</sequence>
<reference key="1">
    <citation type="submission" date="2008-04" db="EMBL/GenBank/DDBJ databases">
        <title>Complete sequence of Clostridium botulinum strain Eklund.</title>
        <authorList>
            <person name="Brinkac L.M."/>
            <person name="Brown J.L."/>
            <person name="Bruce D."/>
            <person name="Detter C."/>
            <person name="Munk C."/>
            <person name="Smith L.A."/>
            <person name="Smith T.J."/>
            <person name="Sutton G."/>
            <person name="Brettin T.S."/>
        </authorList>
    </citation>
    <scope>NUCLEOTIDE SEQUENCE [LARGE SCALE GENOMIC DNA]</scope>
    <source>
        <strain>Eklund 17B / Type B</strain>
    </source>
</reference>
<proteinExistence type="inferred from homology"/>
<keyword id="KW-0028">Amino-acid biosynthesis</keyword>
<keyword id="KW-0057">Aromatic amino acid biosynthesis</keyword>
<keyword id="KW-0456">Lyase</keyword>
<keyword id="KW-0704">Schiff base</keyword>
<accession>B2TQ57</accession>
<organism>
    <name type="scientific">Clostridium botulinum (strain Eklund 17B / Type B)</name>
    <dbReference type="NCBI Taxonomy" id="935198"/>
    <lineage>
        <taxon>Bacteria</taxon>
        <taxon>Bacillati</taxon>
        <taxon>Bacillota</taxon>
        <taxon>Clostridia</taxon>
        <taxon>Eubacteriales</taxon>
        <taxon>Clostridiaceae</taxon>
        <taxon>Clostridium</taxon>
    </lineage>
</organism>
<protein>
    <recommendedName>
        <fullName evidence="1">3-dehydroquinate dehydratase</fullName>
        <shortName evidence="1">3-dehydroquinase</shortName>
        <ecNumber evidence="1">4.2.1.10</ecNumber>
    </recommendedName>
    <alternativeName>
        <fullName evidence="1">Type I DHQase</fullName>
    </alternativeName>
    <alternativeName>
        <fullName evidence="1">Type I dehydroquinase</fullName>
        <shortName evidence="1">DHQ1</shortName>
    </alternativeName>
</protein>